<evidence type="ECO:0000250" key="1"/>
<evidence type="ECO:0000305" key="2"/>
<evidence type="ECO:0007829" key="3">
    <source>
        <dbReference type="PDB" id="1IQV"/>
    </source>
</evidence>
<dbReference type="EMBL" id="BA000001">
    <property type="protein sequence ID" value="BAA30651.1"/>
    <property type="molecule type" value="Genomic_DNA"/>
</dbReference>
<dbReference type="PIR" id="C71031">
    <property type="entry name" value="C71031"/>
</dbReference>
<dbReference type="PDB" id="1IQV">
    <property type="method" value="X-ray"/>
    <property type="resolution" value="2.10 A"/>
    <property type="chains" value="A=1-218"/>
</dbReference>
<dbReference type="PDBsum" id="1IQV"/>
<dbReference type="SMR" id="O59230"/>
<dbReference type="STRING" id="70601.gene:9378526"/>
<dbReference type="EnsemblBacteria" id="BAA30651">
    <property type="protein sequence ID" value="BAA30651"/>
    <property type="gene ID" value="BAA30651"/>
</dbReference>
<dbReference type="KEGG" id="pho:PH1541"/>
<dbReference type="eggNOG" id="arCOG04254">
    <property type="taxonomic scope" value="Archaea"/>
</dbReference>
<dbReference type="EvolutionaryTrace" id="O59230"/>
<dbReference type="Proteomes" id="UP000000752">
    <property type="component" value="Chromosome"/>
</dbReference>
<dbReference type="GO" id="GO:0015935">
    <property type="term" value="C:small ribosomal subunit"/>
    <property type="evidence" value="ECO:0007669"/>
    <property type="project" value="InterPro"/>
</dbReference>
<dbReference type="GO" id="GO:0019843">
    <property type="term" value="F:rRNA binding"/>
    <property type="evidence" value="ECO:0007669"/>
    <property type="project" value="UniProtKB-UniRule"/>
</dbReference>
<dbReference type="GO" id="GO:0003735">
    <property type="term" value="F:structural constituent of ribosome"/>
    <property type="evidence" value="ECO:0007669"/>
    <property type="project" value="InterPro"/>
</dbReference>
<dbReference type="GO" id="GO:0006412">
    <property type="term" value="P:translation"/>
    <property type="evidence" value="ECO:0007669"/>
    <property type="project" value="UniProtKB-UniRule"/>
</dbReference>
<dbReference type="CDD" id="cd14867">
    <property type="entry name" value="uS7_Eukaryote"/>
    <property type="match status" value="1"/>
</dbReference>
<dbReference type="Gene3D" id="1.10.455.10">
    <property type="entry name" value="Ribosomal protein S7 domain"/>
    <property type="match status" value="1"/>
</dbReference>
<dbReference type="HAMAP" id="MF_00480_A">
    <property type="entry name" value="Ribosomal_uS7_A"/>
    <property type="match status" value="1"/>
</dbReference>
<dbReference type="InterPro" id="IPR000235">
    <property type="entry name" value="Ribosomal_uS7"/>
</dbReference>
<dbReference type="InterPro" id="IPR026018">
    <property type="entry name" value="Ribosomal_uS7_arc"/>
</dbReference>
<dbReference type="InterPro" id="IPR023798">
    <property type="entry name" value="Ribosomal_uS7_dom"/>
</dbReference>
<dbReference type="InterPro" id="IPR036823">
    <property type="entry name" value="Ribosomal_uS7_dom_sf"/>
</dbReference>
<dbReference type="InterPro" id="IPR005716">
    <property type="entry name" value="Ribosomal_uS7_euk/arc"/>
</dbReference>
<dbReference type="NCBIfam" id="NF003106">
    <property type="entry name" value="PRK04027.1"/>
    <property type="match status" value="1"/>
</dbReference>
<dbReference type="NCBIfam" id="TIGR01028">
    <property type="entry name" value="uS7_euk_arch"/>
    <property type="match status" value="1"/>
</dbReference>
<dbReference type="PANTHER" id="PTHR11205">
    <property type="entry name" value="RIBOSOMAL PROTEIN S7"/>
    <property type="match status" value="1"/>
</dbReference>
<dbReference type="Pfam" id="PF00177">
    <property type="entry name" value="Ribosomal_S7"/>
    <property type="match status" value="1"/>
</dbReference>
<dbReference type="PIRSF" id="PIRSF002122">
    <property type="entry name" value="RPS7p_RPS7a_RPS5e_RPS7o"/>
    <property type="match status" value="1"/>
</dbReference>
<dbReference type="SUPFAM" id="SSF47973">
    <property type="entry name" value="Ribosomal protein S7"/>
    <property type="match status" value="1"/>
</dbReference>
<accession>O59230</accession>
<reference key="1">
    <citation type="journal article" date="1998" name="DNA Res.">
        <title>Complete sequence and gene organization of the genome of a hyper-thermophilic archaebacterium, Pyrococcus horikoshii OT3.</title>
        <authorList>
            <person name="Kawarabayasi Y."/>
            <person name="Sawada M."/>
            <person name="Horikawa H."/>
            <person name="Haikawa Y."/>
            <person name="Hino Y."/>
            <person name="Yamamoto S."/>
            <person name="Sekine M."/>
            <person name="Baba S."/>
            <person name="Kosugi H."/>
            <person name="Hosoyama A."/>
            <person name="Nagai Y."/>
            <person name="Sakai M."/>
            <person name="Ogura K."/>
            <person name="Otsuka R."/>
            <person name="Nakazawa H."/>
            <person name="Takamiya M."/>
            <person name="Ohfuku Y."/>
            <person name="Funahashi T."/>
            <person name="Tanaka T."/>
            <person name="Kudoh Y."/>
            <person name="Yamazaki J."/>
            <person name="Kushida N."/>
            <person name="Oguchi A."/>
            <person name="Aoki K."/>
            <person name="Yoshizawa T."/>
            <person name="Nakamura Y."/>
            <person name="Robb F.T."/>
            <person name="Horikoshi K."/>
            <person name="Masuchi Y."/>
            <person name="Shizuya H."/>
            <person name="Kikuchi H."/>
        </authorList>
    </citation>
    <scope>NUCLEOTIDE SEQUENCE [LARGE SCALE GENOMIC DNA]</scope>
    <source>
        <strain>ATCC 700860 / DSM 12428 / JCM 9974 / NBRC 100139 / OT-3</strain>
    </source>
</reference>
<reference key="2">
    <citation type="journal article" date="2001" name="J. Biochem.">
        <title>The structure of the archaebacterial ribosomal protein S7 and its possible interaction with 16S rRNA.</title>
        <authorList>
            <person name="Hosaka H."/>
            <person name="Yao M."/>
            <person name="Kimura M."/>
            <person name="Tanaka I."/>
        </authorList>
    </citation>
    <scope>X-RAY CRYSTALLOGRAPHY (2.1 ANGSTROMS)</scope>
</reference>
<sequence>MKEVAKPLQERFFIPHEIKVMGRWSTEDVEVKDPSLKPYINLEPRLLPHTHGRHAKKHFGKANVHIVERLINKVMRSGGSHYKVAGHFMRREHRSLNSKKVRAYEVVKEAFKIIEKRTGKNPIQVLVWAIENAAPREDTTSVMFGGIRYHVAVDISPLRRLDVALRNIALGASAKCYRTKMSFAEALAEEIILAANKDPKSYAYSKKLEIERIAESSR</sequence>
<name>RS7_PYRHO</name>
<proteinExistence type="evidence at protein level"/>
<protein>
    <recommendedName>
        <fullName evidence="2">Small ribosomal subunit protein uS7</fullName>
    </recommendedName>
    <alternativeName>
        <fullName>30S ribosomal protein S7</fullName>
    </alternativeName>
</protein>
<organism>
    <name type="scientific">Pyrococcus horikoshii (strain ATCC 700860 / DSM 12428 / JCM 9974 / NBRC 100139 / OT-3)</name>
    <dbReference type="NCBI Taxonomy" id="70601"/>
    <lineage>
        <taxon>Archaea</taxon>
        <taxon>Methanobacteriati</taxon>
        <taxon>Methanobacteriota</taxon>
        <taxon>Thermococci</taxon>
        <taxon>Thermococcales</taxon>
        <taxon>Thermococcaceae</taxon>
        <taxon>Pyrococcus</taxon>
    </lineage>
</organism>
<keyword id="KW-0002">3D-structure</keyword>
<keyword id="KW-0687">Ribonucleoprotein</keyword>
<keyword id="KW-0689">Ribosomal protein</keyword>
<keyword id="KW-0694">RNA-binding</keyword>
<keyword id="KW-0699">rRNA-binding</keyword>
<comment type="function">
    <text evidence="1">One of the primary rRNA binding proteins, it binds directly to 16S rRNA where it nucleates assembly of the head domain of the 30S subunit. Is located at the subunit interface close to the decoding center (By similarity).</text>
</comment>
<comment type="subunit">
    <text>Part of the 30S ribosomal subunit.</text>
</comment>
<comment type="similarity">
    <text evidence="2">Belongs to the universal ribosomal protein uS7 family.</text>
</comment>
<gene>
    <name type="primary">rps7</name>
    <name type="ordered locus">PH1541</name>
</gene>
<feature type="chain" id="PRO_0000124410" description="Small ribosomal subunit protein uS7">
    <location>
        <begin position="1"/>
        <end position="218"/>
    </location>
</feature>
<feature type="turn" evidence="3">
    <location>
        <begin position="21"/>
        <end position="23"/>
    </location>
</feature>
<feature type="turn" evidence="3">
    <location>
        <begin position="34"/>
        <end position="36"/>
    </location>
</feature>
<feature type="helix" evidence="3">
    <location>
        <begin position="37"/>
        <end position="39"/>
    </location>
</feature>
<feature type="helix" evidence="3">
    <location>
        <begin position="66"/>
        <end position="75"/>
    </location>
</feature>
<feature type="helix" evidence="3">
    <location>
        <begin position="99"/>
        <end position="118"/>
    </location>
</feature>
<feature type="helix" evidence="3">
    <location>
        <begin position="122"/>
        <end position="133"/>
    </location>
</feature>
<feature type="strand" evidence="3">
    <location>
        <begin position="138"/>
        <end position="144"/>
    </location>
</feature>
<feature type="strand" evidence="3">
    <location>
        <begin position="147"/>
        <end position="153"/>
    </location>
</feature>
<feature type="helix" evidence="3">
    <location>
        <begin position="157"/>
        <end position="178"/>
    </location>
</feature>
<feature type="strand" evidence="3">
    <location>
        <begin position="179"/>
        <end position="181"/>
    </location>
</feature>
<feature type="helix" evidence="3">
    <location>
        <begin position="183"/>
        <end position="195"/>
    </location>
</feature>
<feature type="helix" evidence="3">
    <location>
        <begin position="202"/>
        <end position="216"/>
    </location>
</feature>